<name>AROB_SYNC1</name>
<organism>
    <name type="scientific">Syntrophotalea carbinolica (strain DSM 2380 / NBRC 103641 / GraBd1)</name>
    <name type="common">Pelobacter carbinolicus</name>
    <dbReference type="NCBI Taxonomy" id="338963"/>
    <lineage>
        <taxon>Bacteria</taxon>
        <taxon>Pseudomonadati</taxon>
        <taxon>Thermodesulfobacteriota</taxon>
        <taxon>Desulfuromonadia</taxon>
        <taxon>Desulfuromonadales</taxon>
        <taxon>Syntrophotaleaceae</taxon>
        <taxon>Syntrophotalea</taxon>
    </lineage>
</organism>
<protein>
    <recommendedName>
        <fullName evidence="1">3-dehydroquinate synthase</fullName>
        <shortName evidence="1">DHQS</shortName>
        <ecNumber evidence="1">4.2.3.4</ecNumber>
    </recommendedName>
</protein>
<keyword id="KW-0028">Amino-acid biosynthesis</keyword>
<keyword id="KW-0057">Aromatic amino acid biosynthesis</keyword>
<keyword id="KW-0170">Cobalt</keyword>
<keyword id="KW-0963">Cytoplasm</keyword>
<keyword id="KW-0456">Lyase</keyword>
<keyword id="KW-0479">Metal-binding</keyword>
<keyword id="KW-0520">NAD</keyword>
<keyword id="KW-0547">Nucleotide-binding</keyword>
<keyword id="KW-1185">Reference proteome</keyword>
<keyword id="KW-0862">Zinc</keyword>
<accession>Q3A2N6</accession>
<proteinExistence type="inferred from homology"/>
<gene>
    <name evidence="1" type="primary">aroB</name>
    <name type="ordered locus">Pcar_2132</name>
</gene>
<evidence type="ECO:0000255" key="1">
    <source>
        <dbReference type="HAMAP-Rule" id="MF_00110"/>
    </source>
</evidence>
<dbReference type="EC" id="4.2.3.4" evidence="1"/>
<dbReference type="EMBL" id="CP000142">
    <property type="protein sequence ID" value="ABA89371.1"/>
    <property type="molecule type" value="Genomic_DNA"/>
</dbReference>
<dbReference type="RefSeq" id="WP_011341884.1">
    <property type="nucleotide sequence ID" value="NC_007498.2"/>
</dbReference>
<dbReference type="SMR" id="Q3A2N6"/>
<dbReference type="STRING" id="338963.Pcar_2132"/>
<dbReference type="KEGG" id="pca:Pcar_2132"/>
<dbReference type="eggNOG" id="COG0337">
    <property type="taxonomic scope" value="Bacteria"/>
</dbReference>
<dbReference type="HOGENOM" id="CLU_001201_0_2_7"/>
<dbReference type="OrthoDB" id="9806583at2"/>
<dbReference type="UniPathway" id="UPA00053">
    <property type="reaction ID" value="UER00085"/>
</dbReference>
<dbReference type="Proteomes" id="UP000002534">
    <property type="component" value="Chromosome"/>
</dbReference>
<dbReference type="GO" id="GO:0005737">
    <property type="term" value="C:cytoplasm"/>
    <property type="evidence" value="ECO:0007669"/>
    <property type="project" value="UniProtKB-SubCell"/>
</dbReference>
<dbReference type="GO" id="GO:0003856">
    <property type="term" value="F:3-dehydroquinate synthase activity"/>
    <property type="evidence" value="ECO:0007669"/>
    <property type="project" value="UniProtKB-UniRule"/>
</dbReference>
<dbReference type="GO" id="GO:0046872">
    <property type="term" value="F:metal ion binding"/>
    <property type="evidence" value="ECO:0007669"/>
    <property type="project" value="UniProtKB-KW"/>
</dbReference>
<dbReference type="GO" id="GO:0000166">
    <property type="term" value="F:nucleotide binding"/>
    <property type="evidence" value="ECO:0007669"/>
    <property type="project" value="UniProtKB-KW"/>
</dbReference>
<dbReference type="GO" id="GO:0008652">
    <property type="term" value="P:amino acid biosynthetic process"/>
    <property type="evidence" value="ECO:0007669"/>
    <property type="project" value="UniProtKB-KW"/>
</dbReference>
<dbReference type="GO" id="GO:0009073">
    <property type="term" value="P:aromatic amino acid family biosynthetic process"/>
    <property type="evidence" value="ECO:0007669"/>
    <property type="project" value="UniProtKB-KW"/>
</dbReference>
<dbReference type="GO" id="GO:0009423">
    <property type="term" value="P:chorismate biosynthetic process"/>
    <property type="evidence" value="ECO:0007669"/>
    <property type="project" value="UniProtKB-UniRule"/>
</dbReference>
<dbReference type="CDD" id="cd08195">
    <property type="entry name" value="DHQS"/>
    <property type="match status" value="1"/>
</dbReference>
<dbReference type="FunFam" id="3.40.50.1970:FF:000001">
    <property type="entry name" value="3-dehydroquinate synthase"/>
    <property type="match status" value="1"/>
</dbReference>
<dbReference type="Gene3D" id="3.40.50.1970">
    <property type="match status" value="1"/>
</dbReference>
<dbReference type="Gene3D" id="1.20.1090.10">
    <property type="entry name" value="Dehydroquinate synthase-like - alpha domain"/>
    <property type="match status" value="1"/>
</dbReference>
<dbReference type="HAMAP" id="MF_00110">
    <property type="entry name" value="DHQ_synthase"/>
    <property type="match status" value="1"/>
</dbReference>
<dbReference type="InterPro" id="IPR050071">
    <property type="entry name" value="Dehydroquinate_synthase"/>
</dbReference>
<dbReference type="InterPro" id="IPR016037">
    <property type="entry name" value="DHQ_synth_AroB"/>
</dbReference>
<dbReference type="InterPro" id="IPR030963">
    <property type="entry name" value="DHQ_synth_fam"/>
</dbReference>
<dbReference type="InterPro" id="IPR030960">
    <property type="entry name" value="DHQS/DOIS_N"/>
</dbReference>
<dbReference type="InterPro" id="IPR056179">
    <property type="entry name" value="DHQS_C"/>
</dbReference>
<dbReference type="NCBIfam" id="TIGR01357">
    <property type="entry name" value="aroB"/>
    <property type="match status" value="1"/>
</dbReference>
<dbReference type="PANTHER" id="PTHR43622">
    <property type="entry name" value="3-DEHYDROQUINATE SYNTHASE"/>
    <property type="match status" value="1"/>
</dbReference>
<dbReference type="PANTHER" id="PTHR43622:SF7">
    <property type="entry name" value="3-DEHYDROQUINATE SYNTHASE, CHLOROPLASTIC"/>
    <property type="match status" value="1"/>
</dbReference>
<dbReference type="Pfam" id="PF01761">
    <property type="entry name" value="DHQ_synthase"/>
    <property type="match status" value="1"/>
</dbReference>
<dbReference type="Pfam" id="PF24621">
    <property type="entry name" value="DHQS_C"/>
    <property type="match status" value="1"/>
</dbReference>
<dbReference type="PIRSF" id="PIRSF001455">
    <property type="entry name" value="DHQ_synth"/>
    <property type="match status" value="1"/>
</dbReference>
<dbReference type="SUPFAM" id="SSF56796">
    <property type="entry name" value="Dehydroquinate synthase-like"/>
    <property type="match status" value="1"/>
</dbReference>
<feature type="chain" id="PRO_0000231107" description="3-dehydroquinate synthase">
    <location>
        <begin position="1"/>
        <end position="362"/>
    </location>
</feature>
<feature type="binding site" evidence="1">
    <location>
        <begin position="74"/>
        <end position="79"/>
    </location>
    <ligand>
        <name>NAD(+)</name>
        <dbReference type="ChEBI" id="CHEBI:57540"/>
    </ligand>
</feature>
<feature type="binding site" evidence="1">
    <location>
        <begin position="108"/>
        <end position="112"/>
    </location>
    <ligand>
        <name>NAD(+)</name>
        <dbReference type="ChEBI" id="CHEBI:57540"/>
    </ligand>
</feature>
<feature type="binding site" evidence="1">
    <location>
        <begin position="132"/>
        <end position="133"/>
    </location>
    <ligand>
        <name>NAD(+)</name>
        <dbReference type="ChEBI" id="CHEBI:57540"/>
    </ligand>
</feature>
<feature type="binding site" evidence="1">
    <location>
        <position position="145"/>
    </location>
    <ligand>
        <name>NAD(+)</name>
        <dbReference type="ChEBI" id="CHEBI:57540"/>
    </ligand>
</feature>
<feature type="binding site" evidence="1">
    <location>
        <position position="154"/>
    </location>
    <ligand>
        <name>NAD(+)</name>
        <dbReference type="ChEBI" id="CHEBI:57540"/>
    </ligand>
</feature>
<feature type="binding site" evidence="1">
    <location>
        <position position="187"/>
    </location>
    <ligand>
        <name>Zn(2+)</name>
        <dbReference type="ChEBI" id="CHEBI:29105"/>
    </ligand>
</feature>
<feature type="binding site" evidence="1">
    <location>
        <position position="250"/>
    </location>
    <ligand>
        <name>Zn(2+)</name>
        <dbReference type="ChEBI" id="CHEBI:29105"/>
    </ligand>
</feature>
<feature type="binding site" evidence="1">
    <location>
        <position position="267"/>
    </location>
    <ligand>
        <name>Zn(2+)</name>
        <dbReference type="ChEBI" id="CHEBI:29105"/>
    </ligand>
</feature>
<sequence length="362" mass="39923">MKLKRMVVGLGERSYPIWIGGGIFSRLPEALQEVNFPKKIAVVSNPLVQSLYGQALADALQSSGYDHHFISIPDGEEHKNWTTLQTIYDGLIAKGFDRHCGLIALGGGVTGDMGGFAAATFLRGIPYIQVPTTLLAQVDSSVGGKTAINHPQGKNLIGAFYQPRHVHIDVDTLQSLDAREFATGMAEVIKYGIIKDKAFFDWLYTHREALQRRDTEALISAVKRACQIKANIVEVDEKEQALRAILNFGHTFGHAIENLSGYQTYRHGEAVAIGMMVAAHVSRRMDLCTADEVGAIERLLQVFDLPVTPPDYSLEAYLEAMQRDKKVQQGKLRLVLNKGIGDCLVQEIDAPAMLFAEALKQF</sequence>
<comment type="function">
    <text evidence="1">Catalyzes the conversion of 3-deoxy-D-arabino-heptulosonate 7-phosphate (DAHP) to dehydroquinate (DHQ).</text>
</comment>
<comment type="catalytic activity">
    <reaction evidence="1">
        <text>7-phospho-2-dehydro-3-deoxy-D-arabino-heptonate = 3-dehydroquinate + phosphate</text>
        <dbReference type="Rhea" id="RHEA:21968"/>
        <dbReference type="ChEBI" id="CHEBI:32364"/>
        <dbReference type="ChEBI" id="CHEBI:43474"/>
        <dbReference type="ChEBI" id="CHEBI:58394"/>
        <dbReference type="EC" id="4.2.3.4"/>
    </reaction>
</comment>
<comment type="cofactor">
    <cofactor evidence="1">
        <name>Co(2+)</name>
        <dbReference type="ChEBI" id="CHEBI:48828"/>
    </cofactor>
    <cofactor evidence="1">
        <name>Zn(2+)</name>
        <dbReference type="ChEBI" id="CHEBI:29105"/>
    </cofactor>
    <text evidence="1">Binds 1 divalent metal cation per subunit. Can use either Co(2+) or Zn(2+).</text>
</comment>
<comment type="cofactor">
    <cofactor evidence="1">
        <name>NAD(+)</name>
        <dbReference type="ChEBI" id="CHEBI:57540"/>
    </cofactor>
</comment>
<comment type="pathway">
    <text evidence="1">Metabolic intermediate biosynthesis; chorismate biosynthesis; chorismate from D-erythrose 4-phosphate and phosphoenolpyruvate: step 2/7.</text>
</comment>
<comment type="subcellular location">
    <subcellularLocation>
        <location evidence="1">Cytoplasm</location>
    </subcellularLocation>
</comment>
<comment type="similarity">
    <text evidence="1">Belongs to the sugar phosphate cyclases superfamily. Dehydroquinate synthase family.</text>
</comment>
<reference key="1">
    <citation type="submission" date="2005-10" db="EMBL/GenBank/DDBJ databases">
        <title>Complete sequence of Pelobacter carbinolicus DSM 2380.</title>
        <authorList>
            <person name="Copeland A."/>
            <person name="Lucas S."/>
            <person name="Lapidus A."/>
            <person name="Barry K."/>
            <person name="Detter J.C."/>
            <person name="Glavina T."/>
            <person name="Hammon N."/>
            <person name="Israni S."/>
            <person name="Pitluck S."/>
            <person name="Chertkov O."/>
            <person name="Schmutz J."/>
            <person name="Larimer F."/>
            <person name="Land M."/>
            <person name="Kyrpides N."/>
            <person name="Ivanova N."/>
            <person name="Richardson P."/>
        </authorList>
    </citation>
    <scope>NUCLEOTIDE SEQUENCE [LARGE SCALE GENOMIC DNA]</scope>
    <source>
        <strain>DSM 2380 / NBRC 103641 / GraBd1</strain>
    </source>
</reference>